<keyword id="KW-0007">Acetylation</keyword>
<keyword id="KW-0963">Cytoplasm</keyword>
<keyword id="KW-0276">Fatty acid metabolism</keyword>
<keyword id="KW-0379">Hydroxylation</keyword>
<keyword id="KW-0443">Lipid metabolism</keyword>
<keyword id="KW-0521">NADP</keyword>
<keyword id="KW-0560">Oxidoreductase</keyword>
<keyword id="KW-0597">Phosphoprotein</keyword>
<keyword id="KW-0644">Prostaglandin metabolism</keyword>
<keyword id="KW-1185">Reference proteome</keyword>
<evidence type="ECO:0000250" key="1">
    <source>
        <dbReference type="UniProtKB" id="P97584"/>
    </source>
</evidence>
<evidence type="ECO:0000250" key="2">
    <source>
        <dbReference type="UniProtKB" id="Q14914"/>
    </source>
</evidence>
<evidence type="ECO:0000250" key="3">
    <source>
        <dbReference type="UniProtKB" id="Q29073"/>
    </source>
</evidence>
<evidence type="ECO:0000250" key="4">
    <source>
        <dbReference type="UniProtKB" id="Q91YR9"/>
    </source>
</evidence>
<evidence type="ECO:0000250" key="5">
    <source>
        <dbReference type="UniProtKB" id="Q9EQZ5"/>
    </source>
</evidence>
<evidence type="ECO:0000305" key="6"/>
<gene>
    <name type="primary">PTGR1</name>
    <name type="synonym">LTB4DH</name>
</gene>
<dbReference type="EC" id="1.3.1.48" evidence="2"/>
<dbReference type="EC" id="1.3.1.74" evidence="2"/>
<dbReference type="EMBL" id="Z34285">
    <property type="protein sequence ID" value="CAA84039.1"/>
    <property type="molecule type" value="mRNA"/>
</dbReference>
<dbReference type="PIR" id="S47093">
    <property type="entry name" value="S47093"/>
</dbReference>
<dbReference type="RefSeq" id="NP_001076171.1">
    <property type="nucleotide sequence ID" value="NM_001082702.1"/>
</dbReference>
<dbReference type="SMR" id="Q28719"/>
<dbReference type="FunCoup" id="Q28719">
    <property type="interactions" value="146"/>
</dbReference>
<dbReference type="STRING" id="9986.ENSOCUP00000044316"/>
<dbReference type="PaxDb" id="9986-ENSOCUP00000004219"/>
<dbReference type="GeneID" id="100009440"/>
<dbReference type="KEGG" id="ocu:100009440"/>
<dbReference type="CTD" id="22949"/>
<dbReference type="eggNOG" id="KOG1196">
    <property type="taxonomic scope" value="Eukaryota"/>
</dbReference>
<dbReference type="InParanoid" id="Q28719"/>
<dbReference type="OrthoDB" id="809632at2759"/>
<dbReference type="Proteomes" id="UP000001811">
    <property type="component" value="Unplaced"/>
</dbReference>
<dbReference type="GO" id="GO:0005737">
    <property type="term" value="C:cytoplasm"/>
    <property type="evidence" value="ECO:0000250"/>
    <property type="project" value="UniProtKB"/>
</dbReference>
<dbReference type="GO" id="GO:0036185">
    <property type="term" value="F:13-lipoxin reductase activity"/>
    <property type="evidence" value="ECO:0000250"/>
    <property type="project" value="UniProtKB"/>
</dbReference>
<dbReference type="GO" id="GO:0047522">
    <property type="term" value="F:15-oxoprostaglandin 13-oxidase [NAD(P)+] activity"/>
    <property type="evidence" value="ECO:0000250"/>
    <property type="project" value="UniProtKB"/>
</dbReference>
<dbReference type="GO" id="GO:0035798">
    <property type="term" value="F:2-alkenal reductase (NADPH) activity"/>
    <property type="evidence" value="ECO:0000250"/>
    <property type="project" value="UniProtKB"/>
</dbReference>
<dbReference type="GO" id="GO:0097257">
    <property type="term" value="F:leukotriene B4 12-hydroxy dehydrogenase activity"/>
    <property type="evidence" value="ECO:0000250"/>
    <property type="project" value="UniProtKB"/>
</dbReference>
<dbReference type="GO" id="GO:0036102">
    <property type="term" value="P:leukotriene B4 metabolic process"/>
    <property type="evidence" value="ECO:0000250"/>
    <property type="project" value="UniProtKB"/>
</dbReference>
<dbReference type="GO" id="GO:2001302">
    <property type="term" value="P:lipoxin A4 metabolic process"/>
    <property type="evidence" value="ECO:0000250"/>
    <property type="project" value="UniProtKB"/>
</dbReference>
<dbReference type="GO" id="GO:0006693">
    <property type="term" value="P:prostaglandin metabolic process"/>
    <property type="evidence" value="ECO:0000250"/>
    <property type="project" value="UniProtKB"/>
</dbReference>
<dbReference type="CDD" id="cd08294">
    <property type="entry name" value="leukotriene_B4_DH_like"/>
    <property type="match status" value="1"/>
</dbReference>
<dbReference type="FunFam" id="3.40.50.720:FF:000121">
    <property type="entry name" value="Prostaglandin reductase 2"/>
    <property type="match status" value="1"/>
</dbReference>
<dbReference type="Gene3D" id="3.90.180.10">
    <property type="entry name" value="Medium-chain alcohol dehydrogenases, catalytic domain"/>
    <property type="match status" value="1"/>
</dbReference>
<dbReference type="Gene3D" id="3.40.50.720">
    <property type="entry name" value="NAD(P)-binding Rossmann-like Domain"/>
    <property type="match status" value="1"/>
</dbReference>
<dbReference type="InterPro" id="IPR013149">
    <property type="entry name" value="ADH-like_C"/>
</dbReference>
<dbReference type="InterPro" id="IPR041694">
    <property type="entry name" value="ADH_N_2"/>
</dbReference>
<dbReference type="InterPro" id="IPR011032">
    <property type="entry name" value="GroES-like_sf"/>
</dbReference>
<dbReference type="InterPro" id="IPR045010">
    <property type="entry name" value="MDR_fam"/>
</dbReference>
<dbReference type="InterPro" id="IPR036291">
    <property type="entry name" value="NAD(P)-bd_dom_sf"/>
</dbReference>
<dbReference type="InterPro" id="IPR020843">
    <property type="entry name" value="PKS_ER"/>
</dbReference>
<dbReference type="InterPro" id="IPR014190">
    <property type="entry name" value="PTGR1"/>
</dbReference>
<dbReference type="NCBIfam" id="TIGR02825">
    <property type="entry name" value="B4_12hDH"/>
    <property type="match status" value="1"/>
</dbReference>
<dbReference type="PANTHER" id="PTHR43205">
    <property type="entry name" value="PROSTAGLANDIN REDUCTASE"/>
    <property type="match status" value="1"/>
</dbReference>
<dbReference type="PANTHER" id="PTHR43205:SF7">
    <property type="entry name" value="PROSTAGLANDIN REDUCTASE 1"/>
    <property type="match status" value="1"/>
</dbReference>
<dbReference type="Pfam" id="PF16884">
    <property type="entry name" value="ADH_N_2"/>
    <property type="match status" value="1"/>
</dbReference>
<dbReference type="Pfam" id="PF00107">
    <property type="entry name" value="ADH_zinc_N"/>
    <property type="match status" value="1"/>
</dbReference>
<dbReference type="SMART" id="SM00829">
    <property type="entry name" value="PKS_ER"/>
    <property type="match status" value="1"/>
</dbReference>
<dbReference type="SUPFAM" id="SSF50129">
    <property type="entry name" value="GroES-like"/>
    <property type="match status" value="2"/>
</dbReference>
<dbReference type="SUPFAM" id="SSF51735">
    <property type="entry name" value="NAD(P)-binding Rossmann-fold domains"/>
    <property type="match status" value="1"/>
</dbReference>
<reference key="1">
    <citation type="submission" date="1994-06" db="EMBL/GenBank/DDBJ databases">
        <title>'Adults only' mRNAs: differential cloning to search for proteins present in intestine of adult but not baby rabbits.</title>
        <authorList>
            <person name="Boll W."/>
            <person name="Mantei N."/>
        </authorList>
    </citation>
    <scope>NUCLEOTIDE SEQUENCE [MRNA]</scope>
    <source>
        <strain>New Zealand white</strain>
        <tissue>Small intestine</tissue>
    </source>
</reference>
<accession>Q28719</accession>
<sequence length="349" mass="38219">MVRAKNWTLKKHFHGHPTDSDFELKTVELPPLNNGEVLLEALFLSVDPYMRLGSKRLKEGDTMMGQQVARVVESKNPAWPVGTLVLAHSGWASHSISDGQQLEKLLTEWPDTLPLSLALGTVGMPGITAYFGLLEICGAKSGDTVLVNAAAGAVGAVVGQIAKIKGCRVVGAAGSEEKVDYLKKIGFDFAFNYKTVKSLEETLKKAAPDGYDCYFDNVGGEFSNTVIRQMKKFGRVAICGAISMYNSTGQLPPGPSPESVLYQEIRMEGFIFNRWKGEVGQKALKELLTWVLEGKIQYREFVIEGFENMPAAFMRMLKGENVGKARSESLKSGTCKPGDHPHDLIFPIT</sequence>
<comment type="function">
    <text evidence="1 2 3">NAD(P)H-dependent oxidoreductase involved in metabolic inactivation of pro- and anti-inflammatory eicosanoids: prostaglandins (PG), leukotrienes (LT) and lipoxins (LX). Catalyzes with high efficiency the reduction of the 13,14 double bond of 15-oxoPGs, including 15-oxo-PGE1, 15-oxo-PGE2, 15-oxo-PGF1-alpha and 15-oxo-PGF2-alpha (By similarity). Catalyzes with lower efficiency the oxidation of the hydroxyl group at C12 of LTB4 and its derivatives, converting them into biologically less active 12-oxo-LTB4 metabolites (By similarity). Reduces 15-oxo-LXA4 to 13,14 dihydro-15-oxo-LXA4, enhancing neutrophil recruitment at the inflammatory site (By similarity). Plays a role in metabolic detoxification of alkenals and ketones. Reduces alpha,beta-unsaturated alkenals and ketones, particularly those with medium-chain length, showing highest affinity toward (2E)-decenal and (3E)-3-nonen-2-one (By similarity). May inactivate 4-hydroxy-2-nonenal, a cytotoxic lipid constituent of oxidized low-density lipoprotein particles (By similarity).</text>
</comment>
<comment type="catalytic activity">
    <reaction evidence="2">
        <text>13,14-dihydro-15-oxo-prostaglandin E1 + NADP(+) = 15-oxoprostaglandin E1 + NADPH + H(+)</text>
        <dbReference type="Rhea" id="RHEA:50584"/>
        <dbReference type="ChEBI" id="CHEBI:15378"/>
        <dbReference type="ChEBI" id="CHEBI:57401"/>
        <dbReference type="ChEBI" id="CHEBI:57783"/>
        <dbReference type="ChEBI" id="CHEBI:58349"/>
        <dbReference type="ChEBI" id="CHEBI:133408"/>
    </reaction>
    <physiologicalReaction direction="right-to-left" evidence="2">
        <dbReference type="Rhea" id="RHEA:50586"/>
    </physiologicalReaction>
</comment>
<comment type="catalytic activity">
    <reaction evidence="2">
        <text>13,14-dihydro-15-oxo-prostaglandin E2 + NADP(+) = 15-oxoprostaglandin E2 + NADPH + H(+)</text>
        <dbReference type="Rhea" id="RHEA:11912"/>
        <dbReference type="ChEBI" id="CHEBI:15378"/>
        <dbReference type="ChEBI" id="CHEBI:57400"/>
        <dbReference type="ChEBI" id="CHEBI:57402"/>
        <dbReference type="ChEBI" id="CHEBI:57783"/>
        <dbReference type="ChEBI" id="CHEBI:58349"/>
        <dbReference type="EC" id="1.3.1.48"/>
    </reaction>
    <physiologicalReaction direction="right-to-left" evidence="2">
        <dbReference type="Rhea" id="RHEA:11914"/>
    </physiologicalReaction>
</comment>
<comment type="catalytic activity">
    <reaction evidence="2">
        <text>13,14-dihydro-15-oxo-prostaglandin F1alpha + NADP(+) = 15-oxoprostaglandin F1alpha + NADPH + H(+)</text>
        <dbReference type="Rhea" id="RHEA:50592"/>
        <dbReference type="ChEBI" id="CHEBI:15378"/>
        <dbReference type="ChEBI" id="CHEBI:57783"/>
        <dbReference type="ChEBI" id="CHEBI:58349"/>
        <dbReference type="ChEBI" id="CHEBI:79072"/>
        <dbReference type="ChEBI" id="CHEBI:133411"/>
    </reaction>
    <physiologicalReaction direction="right-to-left" evidence="2">
        <dbReference type="Rhea" id="RHEA:50594"/>
    </physiologicalReaction>
</comment>
<comment type="catalytic activity">
    <reaction evidence="2">
        <text>13,14-dihydro-15-oxo-PGF2alpha + NADP(+) = 15-oxoprostaglandin F2alpha + NADPH + H(+)</text>
        <dbReference type="Rhea" id="RHEA:50588"/>
        <dbReference type="ChEBI" id="CHEBI:15378"/>
        <dbReference type="ChEBI" id="CHEBI:57783"/>
        <dbReference type="ChEBI" id="CHEBI:58349"/>
        <dbReference type="ChEBI" id="CHEBI:133374"/>
        <dbReference type="ChEBI" id="CHEBI:133409"/>
    </reaction>
    <physiologicalReaction direction="right-to-left" evidence="2">
        <dbReference type="Rhea" id="RHEA:50590"/>
    </physiologicalReaction>
</comment>
<comment type="catalytic activity">
    <reaction evidence="3 5">
        <text>leukotriene B4 + NADP(+) = 12-oxo-leukotriene B4 + NADPH + H(+)</text>
        <dbReference type="Rhea" id="RHEA:50608"/>
        <dbReference type="ChEBI" id="CHEBI:15378"/>
        <dbReference type="ChEBI" id="CHEBI:57461"/>
        <dbReference type="ChEBI" id="CHEBI:57783"/>
        <dbReference type="ChEBI" id="CHEBI:58349"/>
        <dbReference type="ChEBI" id="CHEBI:133309"/>
    </reaction>
    <physiologicalReaction direction="left-to-right" evidence="3 5">
        <dbReference type="Rhea" id="RHEA:50609"/>
    </physiologicalReaction>
</comment>
<comment type="catalytic activity">
    <reaction evidence="3">
        <text>20-hydroxy-leukotriene B4 + NADP(+) = 12-oxo-20-hydroxy-leukotriene B4 + NADPH + H(+)</text>
        <dbReference type="Rhea" id="RHEA:51208"/>
        <dbReference type="ChEBI" id="CHEBI:15378"/>
        <dbReference type="ChEBI" id="CHEBI:57460"/>
        <dbReference type="ChEBI" id="CHEBI:57783"/>
        <dbReference type="ChEBI" id="CHEBI:58349"/>
        <dbReference type="ChEBI" id="CHEBI:133346"/>
    </reaction>
    <physiologicalReaction direction="left-to-right" evidence="3">
        <dbReference type="Rhea" id="RHEA:51209"/>
    </physiologicalReaction>
</comment>
<comment type="catalytic activity">
    <reaction evidence="3">
        <text>6-trans-leukotriene B4 + NADP(+) = 12-oxo-(5S)-hydroxy-(6E,8E,10E,14Z)-eicosatetraenoate + NADPH + H(+)</text>
        <dbReference type="Rhea" id="RHEA:51204"/>
        <dbReference type="ChEBI" id="CHEBI:15378"/>
        <dbReference type="ChEBI" id="CHEBI:57783"/>
        <dbReference type="ChEBI" id="CHEBI:58349"/>
        <dbReference type="ChEBI" id="CHEBI:90723"/>
        <dbReference type="ChEBI" id="CHEBI:133974"/>
    </reaction>
    <physiologicalReaction direction="left-to-right" evidence="3">
        <dbReference type="Rhea" id="RHEA:51205"/>
    </physiologicalReaction>
</comment>
<comment type="catalytic activity">
    <reaction evidence="3">
        <text>(5S,12S)-dihydroxy-(6E,10E,12E,14Z)-eicosatetraenoate + NADP(+) = 12-oxo-(5S)-hydroxy-(6E,8E,10E,14Z)-eicosatetraenoate + NADPH + H(+)</text>
        <dbReference type="Rhea" id="RHEA:51212"/>
        <dbReference type="ChEBI" id="CHEBI:15378"/>
        <dbReference type="ChEBI" id="CHEBI:57783"/>
        <dbReference type="ChEBI" id="CHEBI:58349"/>
        <dbReference type="ChEBI" id="CHEBI:133974"/>
        <dbReference type="ChEBI" id="CHEBI:133975"/>
    </reaction>
    <physiologicalReaction direction="left-to-right" evidence="3">
        <dbReference type="Rhea" id="RHEA:51213"/>
    </physiologicalReaction>
</comment>
<comment type="catalytic activity">
    <reaction evidence="2">
        <text>an n-alkanal + NADP(+) = an alk-2-enal + NADPH + H(+)</text>
        <dbReference type="Rhea" id="RHEA:13737"/>
        <dbReference type="ChEBI" id="CHEBI:12834"/>
        <dbReference type="ChEBI" id="CHEBI:13757"/>
        <dbReference type="ChEBI" id="CHEBI:15378"/>
        <dbReference type="ChEBI" id="CHEBI:57783"/>
        <dbReference type="ChEBI" id="CHEBI:58349"/>
        <dbReference type="EC" id="1.3.1.74"/>
    </reaction>
    <physiologicalReaction direction="right-to-left" evidence="2">
        <dbReference type="Rhea" id="RHEA:13739"/>
    </physiologicalReaction>
</comment>
<comment type="catalytic activity">
    <reaction evidence="2">
        <text>hexanal + NADP(+) = (E)-hex-2-enal + NADPH + H(+)</text>
        <dbReference type="Rhea" id="RHEA:50776"/>
        <dbReference type="ChEBI" id="CHEBI:15378"/>
        <dbReference type="ChEBI" id="CHEBI:28913"/>
        <dbReference type="ChEBI" id="CHEBI:57783"/>
        <dbReference type="ChEBI" id="CHEBI:58349"/>
        <dbReference type="ChEBI" id="CHEBI:88528"/>
    </reaction>
    <physiologicalReaction direction="right-to-left" evidence="2">
        <dbReference type="Rhea" id="RHEA:50778"/>
    </physiologicalReaction>
</comment>
<comment type="catalytic activity">
    <reaction evidence="2">
        <text>octanal + NADP(+) = (2E)-octenal + NADPH + H(+)</text>
        <dbReference type="Rhea" id="RHEA:50780"/>
        <dbReference type="ChEBI" id="CHEBI:15378"/>
        <dbReference type="ChEBI" id="CHEBI:17935"/>
        <dbReference type="ChEBI" id="CHEBI:57783"/>
        <dbReference type="ChEBI" id="CHEBI:58349"/>
        <dbReference type="ChEBI" id="CHEBI:61748"/>
    </reaction>
    <physiologicalReaction direction="right-to-left" evidence="2">
        <dbReference type="Rhea" id="RHEA:50782"/>
    </physiologicalReaction>
</comment>
<comment type="catalytic activity">
    <reaction evidence="2">
        <text>decanal + NADP(+) = (2E)-decenal + NADPH + H(+)</text>
        <dbReference type="Rhea" id="RHEA:50612"/>
        <dbReference type="ChEBI" id="CHEBI:15378"/>
        <dbReference type="ChEBI" id="CHEBI:31457"/>
        <dbReference type="ChEBI" id="CHEBI:57783"/>
        <dbReference type="ChEBI" id="CHEBI:58349"/>
        <dbReference type="ChEBI" id="CHEBI:133455"/>
    </reaction>
    <physiologicalReaction direction="right-to-left" evidence="2">
        <dbReference type="Rhea" id="RHEA:50614"/>
    </physiologicalReaction>
</comment>
<comment type="catalytic activity">
    <reaction evidence="2">
        <text>dodecanal + NADP(+) = (2E)-dodecenal + NADPH + H(+)</text>
        <dbReference type="Rhea" id="RHEA:50784"/>
        <dbReference type="ChEBI" id="CHEBI:15378"/>
        <dbReference type="ChEBI" id="CHEBI:27836"/>
        <dbReference type="ChEBI" id="CHEBI:57783"/>
        <dbReference type="ChEBI" id="CHEBI:58349"/>
        <dbReference type="ChEBI" id="CHEBI:133741"/>
    </reaction>
    <physiologicalReaction direction="right-to-left" evidence="2">
        <dbReference type="Rhea" id="RHEA:50786"/>
    </physiologicalReaction>
</comment>
<comment type="catalytic activity">
    <reaction evidence="1">
        <text>4-hydroxynonanal + NADP(+) = (E)-4-hydroxynon-2-enal + NADPH + H(+)</text>
        <dbReference type="Rhea" id="RHEA:64736"/>
        <dbReference type="ChEBI" id="CHEBI:15378"/>
        <dbReference type="ChEBI" id="CHEBI:57783"/>
        <dbReference type="ChEBI" id="CHEBI:58349"/>
        <dbReference type="ChEBI" id="CHEBI:58968"/>
        <dbReference type="ChEBI" id="CHEBI:156112"/>
    </reaction>
    <physiologicalReaction direction="right-to-left" evidence="1">
        <dbReference type="Rhea" id="RHEA:64738"/>
    </physiologicalReaction>
</comment>
<comment type="catalytic activity">
    <reaction evidence="2">
        <text>pentan-2-one + NADP(+) = (E)-pent-3-en-2-one + NADPH + H(+)</text>
        <dbReference type="Rhea" id="RHEA:50788"/>
        <dbReference type="ChEBI" id="CHEBI:15378"/>
        <dbReference type="ChEBI" id="CHEBI:16472"/>
        <dbReference type="ChEBI" id="CHEBI:57783"/>
        <dbReference type="ChEBI" id="CHEBI:58349"/>
        <dbReference type="ChEBI" id="CHEBI:145276"/>
    </reaction>
    <physiologicalReaction direction="right-to-left" evidence="2">
        <dbReference type="Rhea" id="RHEA:50790"/>
    </physiologicalReaction>
</comment>
<comment type="catalytic activity">
    <reaction evidence="2">
        <text>nonan-2-one + NADP(+) = (3E)-nonen-2-one + NADPH + H(+)</text>
        <dbReference type="Rhea" id="RHEA:50616"/>
        <dbReference type="ChEBI" id="CHEBI:15378"/>
        <dbReference type="ChEBI" id="CHEBI:57783"/>
        <dbReference type="ChEBI" id="CHEBI:58349"/>
        <dbReference type="ChEBI" id="CHEBI:77927"/>
        <dbReference type="ChEBI" id="CHEBI:133457"/>
    </reaction>
    <physiologicalReaction direction="right-to-left" evidence="2">
        <dbReference type="Rhea" id="RHEA:50618"/>
    </physiologicalReaction>
</comment>
<comment type="subunit">
    <text evidence="5">Monomer or homodimer.</text>
</comment>
<comment type="subcellular location">
    <subcellularLocation>
        <location evidence="3">Cytoplasm</location>
    </subcellularLocation>
</comment>
<comment type="similarity">
    <text evidence="6">Belongs to the NADP-dependent oxidoreductase L4BD family.</text>
</comment>
<feature type="chain" id="PRO_0000218068" description="Prostaglandin reductase 1">
    <location>
        <begin position="1"/>
        <end position="349"/>
    </location>
</feature>
<feature type="binding site" evidence="2">
    <location>
        <begin position="152"/>
        <end position="155"/>
    </location>
    <ligand>
        <name>NADP(+)</name>
        <dbReference type="ChEBI" id="CHEBI:58349"/>
    </ligand>
</feature>
<feature type="binding site" evidence="2">
    <location>
        <position position="178"/>
    </location>
    <ligand>
        <name>NADP(+)</name>
        <dbReference type="ChEBI" id="CHEBI:58349"/>
    </ligand>
</feature>
<feature type="binding site" evidence="2">
    <location>
        <position position="193"/>
    </location>
    <ligand>
        <name>NADP(+)</name>
        <dbReference type="ChEBI" id="CHEBI:58349"/>
    </ligand>
</feature>
<feature type="binding site" evidence="2">
    <location>
        <position position="217"/>
    </location>
    <ligand>
        <name>NADP(+)</name>
        <dbReference type="ChEBI" id="CHEBI:58349"/>
    </ligand>
</feature>
<feature type="binding site" evidence="2">
    <location>
        <begin position="239"/>
        <end position="245"/>
    </location>
    <ligand>
        <name>NADP(+)</name>
        <dbReference type="ChEBI" id="CHEBI:58349"/>
    </ligand>
</feature>
<feature type="binding site" evidence="2">
    <location>
        <begin position="270"/>
        <end position="272"/>
    </location>
    <ligand>
        <name>NADP(+)</name>
        <dbReference type="ChEBI" id="CHEBI:58349"/>
    </ligand>
</feature>
<feature type="binding site" evidence="2">
    <location>
        <position position="321"/>
    </location>
    <ligand>
        <name>NADP(+)</name>
        <dbReference type="ChEBI" id="CHEBI:58349"/>
    </ligand>
</feature>
<feature type="modified residue" description="Phosphothreonine" evidence="2">
    <location>
        <position position="18"/>
    </location>
</feature>
<feature type="modified residue" description="Phosphoserine" evidence="2">
    <location>
        <position position="20"/>
    </location>
</feature>
<feature type="modified residue" description="N6-(2-hydroxyisobutyryl)lysine; alternate" evidence="2">
    <location>
        <position position="178"/>
    </location>
</feature>
<feature type="modified residue" description="N6-acetyllysine; alternate" evidence="4">
    <location>
        <position position="178"/>
    </location>
</feature>
<organism>
    <name type="scientific">Oryctolagus cuniculus</name>
    <name type="common">Rabbit</name>
    <dbReference type="NCBI Taxonomy" id="9986"/>
    <lineage>
        <taxon>Eukaryota</taxon>
        <taxon>Metazoa</taxon>
        <taxon>Chordata</taxon>
        <taxon>Craniata</taxon>
        <taxon>Vertebrata</taxon>
        <taxon>Euteleostomi</taxon>
        <taxon>Mammalia</taxon>
        <taxon>Eutheria</taxon>
        <taxon>Euarchontoglires</taxon>
        <taxon>Glires</taxon>
        <taxon>Lagomorpha</taxon>
        <taxon>Leporidae</taxon>
        <taxon>Oryctolagus</taxon>
    </lineage>
</organism>
<name>PTGR1_RABIT</name>
<protein>
    <recommendedName>
        <fullName>Prostaglandin reductase 1</fullName>
        <shortName>PRG-1</shortName>
    </recommendedName>
    <alternativeName>
        <fullName>15-oxoprostaglandin 13-reductase</fullName>
        <ecNumber evidence="2">1.3.1.48</ecNumber>
    </alternativeName>
    <alternativeName>
        <fullName>ADRAB-F</fullName>
    </alternativeName>
    <alternativeName>
        <fullName evidence="1">Dithiolethione-inducible gene 1 protein</fullName>
        <shortName evidence="1">D3T-inducible gene 1 protein</shortName>
        <shortName evidence="1">DIG-1</shortName>
    </alternativeName>
    <alternativeName>
        <fullName evidence="2">Leukotriene B4 12-hydroxydehydrogenase</fullName>
    </alternativeName>
    <alternativeName>
        <fullName evidence="2">NAD(P)H-dependent alkenal/one oxidoreductase</fullName>
        <ecNumber evidence="2">1.3.1.74</ecNumber>
    </alternativeName>
</protein>
<proteinExistence type="evidence at transcript level"/>